<feature type="chain" id="PRO_1000012751" description="ATP-dependent protease ATPase subunit HslU">
    <location>
        <begin position="1"/>
        <end position="438"/>
    </location>
</feature>
<feature type="binding site" evidence="1">
    <location>
        <position position="18"/>
    </location>
    <ligand>
        <name>ATP</name>
        <dbReference type="ChEBI" id="CHEBI:30616"/>
    </ligand>
</feature>
<feature type="binding site" evidence="1">
    <location>
        <begin position="60"/>
        <end position="65"/>
    </location>
    <ligand>
        <name>ATP</name>
        <dbReference type="ChEBI" id="CHEBI:30616"/>
    </ligand>
</feature>
<feature type="binding site" evidence="1">
    <location>
        <position position="251"/>
    </location>
    <ligand>
        <name>ATP</name>
        <dbReference type="ChEBI" id="CHEBI:30616"/>
    </ligand>
</feature>
<feature type="binding site" evidence="1">
    <location>
        <position position="316"/>
    </location>
    <ligand>
        <name>ATP</name>
        <dbReference type="ChEBI" id="CHEBI:30616"/>
    </ligand>
</feature>
<feature type="binding site" evidence="1">
    <location>
        <position position="388"/>
    </location>
    <ligand>
        <name>ATP</name>
        <dbReference type="ChEBI" id="CHEBI:30616"/>
    </ligand>
</feature>
<proteinExistence type="inferred from homology"/>
<protein>
    <recommendedName>
        <fullName evidence="1">ATP-dependent protease ATPase subunit HslU</fullName>
    </recommendedName>
    <alternativeName>
        <fullName evidence="1">Unfoldase HslU</fullName>
    </alternativeName>
</protein>
<sequence length="438" mass="48291">MSDLTPREIVSELDRFIIGQSDAKRAVAVALRNRWRRKQLGDDLRDEVYPKNILMIGPTGVGKTEISRRLAKLAKAPFIKVEATKFTEVGYVGRDVEQIIRDLVDAAQVMIRENMREEVKAKAHDAAEERVIEALAGKDAREQTRDMFRKKLRAGELDDTVIELEVADNSNPLGGFEIPSQPGGMGGMGPGMMNLGDLFKGMGGRTVKRRLTVAASYDLLIEDEADKLLDAETVTKEALSAVEQSGIVFIDEIDKVCAKSDARGADVSREGVQRDLLPLIEGTTVSTKHGPVKTDHILFIASGAFHIAKPSDLLPELQGRLPIRVNLRALTEDDFVRILTETDNALTRQYTALMATEEVAVEFTDGGIRALAHIAAEVNESVENIGARRLYTVLERVFEELSFTAPDRSGDAVTVDEAFVEQNLGELTRSTDLSRYVL</sequence>
<gene>
    <name evidence="1" type="primary">hslU</name>
    <name type="ordered locus">Jann_0187</name>
</gene>
<comment type="function">
    <text evidence="1">ATPase subunit of a proteasome-like degradation complex; this subunit has chaperone activity. The binding of ATP and its subsequent hydrolysis by HslU are essential for unfolding of protein substrates subsequently hydrolyzed by HslV. HslU recognizes the N-terminal part of its protein substrates and unfolds these before they are guided to HslV for hydrolysis.</text>
</comment>
<comment type="subunit">
    <text evidence="1">A double ring-shaped homohexamer of HslV is capped on each side by a ring-shaped HslU homohexamer. The assembly of the HslU/HslV complex is dependent on binding of ATP.</text>
</comment>
<comment type="subcellular location">
    <subcellularLocation>
        <location evidence="1">Cytoplasm</location>
    </subcellularLocation>
</comment>
<comment type="similarity">
    <text evidence="1">Belongs to the ClpX chaperone family. HslU subfamily.</text>
</comment>
<dbReference type="EMBL" id="CP000264">
    <property type="protein sequence ID" value="ABD53104.1"/>
    <property type="molecule type" value="Genomic_DNA"/>
</dbReference>
<dbReference type="RefSeq" id="WP_011453313.1">
    <property type="nucleotide sequence ID" value="NC_007802.1"/>
</dbReference>
<dbReference type="SMR" id="Q28W08"/>
<dbReference type="STRING" id="290400.Jann_0187"/>
<dbReference type="KEGG" id="jan:Jann_0187"/>
<dbReference type="eggNOG" id="COG1220">
    <property type="taxonomic scope" value="Bacteria"/>
</dbReference>
<dbReference type="HOGENOM" id="CLU_033123_0_0_5"/>
<dbReference type="OrthoDB" id="9804062at2"/>
<dbReference type="Proteomes" id="UP000008326">
    <property type="component" value="Chromosome"/>
</dbReference>
<dbReference type="GO" id="GO:0009376">
    <property type="term" value="C:HslUV protease complex"/>
    <property type="evidence" value="ECO:0007669"/>
    <property type="project" value="UniProtKB-UniRule"/>
</dbReference>
<dbReference type="GO" id="GO:0005524">
    <property type="term" value="F:ATP binding"/>
    <property type="evidence" value="ECO:0007669"/>
    <property type="project" value="UniProtKB-UniRule"/>
</dbReference>
<dbReference type="GO" id="GO:0016887">
    <property type="term" value="F:ATP hydrolysis activity"/>
    <property type="evidence" value="ECO:0007669"/>
    <property type="project" value="InterPro"/>
</dbReference>
<dbReference type="GO" id="GO:0008233">
    <property type="term" value="F:peptidase activity"/>
    <property type="evidence" value="ECO:0007669"/>
    <property type="project" value="InterPro"/>
</dbReference>
<dbReference type="GO" id="GO:0036402">
    <property type="term" value="F:proteasome-activating activity"/>
    <property type="evidence" value="ECO:0007669"/>
    <property type="project" value="UniProtKB-UniRule"/>
</dbReference>
<dbReference type="GO" id="GO:0043335">
    <property type="term" value="P:protein unfolding"/>
    <property type="evidence" value="ECO:0007669"/>
    <property type="project" value="UniProtKB-UniRule"/>
</dbReference>
<dbReference type="GO" id="GO:0051603">
    <property type="term" value="P:proteolysis involved in protein catabolic process"/>
    <property type="evidence" value="ECO:0007669"/>
    <property type="project" value="TreeGrafter"/>
</dbReference>
<dbReference type="CDD" id="cd19498">
    <property type="entry name" value="RecA-like_HslU"/>
    <property type="match status" value="1"/>
</dbReference>
<dbReference type="FunFam" id="3.40.50.300:FF:000213">
    <property type="entry name" value="ATP-dependent protease ATPase subunit HslU"/>
    <property type="match status" value="1"/>
</dbReference>
<dbReference type="FunFam" id="3.40.50.300:FF:000220">
    <property type="entry name" value="ATP-dependent protease ATPase subunit HslU"/>
    <property type="match status" value="1"/>
</dbReference>
<dbReference type="Gene3D" id="1.10.8.60">
    <property type="match status" value="1"/>
</dbReference>
<dbReference type="Gene3D" id="1.10.8.10">
    <property type="entry name" value="DNA helicase RuvA subunit, C-terminal domain"/>
    <property type="match status" value="1"/>
</dbReference>
<dbReference type="Gene3D" id="3.40.50.300">
    <property type="entry name" value="P-loop containing nucleotide triphosphate hydrolases"/>
    <property type="match status" value="2"/>
</dbReference>
<dbReference type="HAMAP" id="MF_00249">
    <property type="entry name" value="HslU"/>
    <property type="match status" value="1"/>
</dbReference>
<dbReference type="InterPro" id="IPR003593">
    <property type="entry name" value="AAA+_ATPase"/>
</dbReference>
<dbReference type="InterPro" id="IPR050052">
    <property type="entry name" value="ATP-dep_Clp_protease_ClpX"/>
</dbReference>
<dbReference type="InterPro" id="IPR003959">
    <property type="entry name" value="ATPase_AAA_core"/>
</dbReference>
<dbReference type="InterPro" id="IPR019489">
    <property type="entry name" value="Clp_ATPase_C"/>
</dbReference>
<dbReference type="InterPro" id="IPR004491">
    <property type="entry name" value="HslU"/>
</dbReference>
<dbReference type="InterPro" id="IPR027417">
    <property type="entry name" value="P-loop_NTPase"/>
</dbReference>
<dbReference type="NCBIfam" id="TIGR00390">
    <property type="entry name" value="hslU"/>
    <property type="match status" value="1"/>
</dbReference>
<dbReference type="NCBIfam" id="NF003544">
    <property type="entry name" value="PRK05201.1"/>
    <property type="match status" value="1"/>
</dbReference>
<dbReference type="PANTHER" id="PTHR48102">
    <property type="entry name" value="ATP-DEPENDENT CLP PROTEASE ATP-BINDING SUBUNIT CLPX-LIKE, MITOCHONDRIAL-RELATED"/>
    <property type="match status" value="1"/>
</dbReference>
<dbReference type="PANTHER" id="PTHR48102:SF3">
    <property type="entry name" value="ATP-DEPENDENT PROTEASE ATPASE SUBUNIT HSLU"/>
    <property type="match status" value="1"/>
</dbReference>
<dbReference type="Pfam" id="PF00004">
    <property type="entry name" value="AAA"/>
    <property type="match status" value="1"/>
</dbReference>
<dbReference type="Pfam" id="PF07724">
    <property type="entry name" value="AAA_2"/>
    <property type="match status" value="1"/>
</dbReference>
<dbReference type="SMART" id="SM00382">
    <property type="entry name" value="AAA"/>
    <property type="match status" value="1"/>
</dbReference>
<dbReference type="SMART" id="SM01086">
    <property type="entry name" value="ClpB_D2-small"/>
    <property type="match status" value="1"/>
</dbReference>
<dbReference type="SUPFAM" id="SSF52540">
    <property type="entry name" value="P-loop containing nucleoside triphosphate hydrolases"/>
    <property type="match status" value="1"/>
</dbReference>
<name>HSLU_JANSC</name>
<reference key="1">
    <citation type="submission" date="2006-02" db="EMBL/GenBank/DDBJ databases">
        <title>Complete sequence of chromosome of Jannaschia sp. CCS1.</title>
        <authorList>
            <consortium name="US DOE Joint Genome Institute"/>
            <person name="Copeland A."/>
            <person name="Lucas S."/>
            <person name="Lapidus A."/>
            <person name="Barry K."/>
            <person name="Detter J.C."/>
            <person name="Glavina del Rio T."/>
            <person name="Hammon N."/>
            <person name="Israni S."/>
            <person name="Pitluck S."/>
            <person name="Brettin T."/>
            <person name="Bruce D."/>
            <person name="Han C."/>
            <person name="Tapia R."/>
            <person name="Gilna P."/>
            <person name="Chertkov O."/>
            <person name="Saunders E."/>
            <person name="Schmutz J."/>
            <person name="Larimer F."/>
            <person name="Land M."/>
            <person name="Kyrpides N."/>
            <person name="Lykidis A."/>
            <person name="Moran M.A."/>
            <person name="Belas R."/>
            <person name="Ye W."/>
            <person name="Buchan A."/>
            <person name="Gonzalez J.M."/>
            <person name="Schell M.A."/>
            <person name="Richardson P."/>
        </authorList>
    </citation>
    <scope>NUCLEOTIDE SEQUENCE [LARGE SCALE GENOMIC DNA]</scope>
    <source>
        <strain>CCS1</strain>
    </source>
</reference>
<evidence type="ECO:0000255" key="1">
    <source>
        <dbReference type="HAMAP-Rule" id="MF_00249"/>
    </source>
</evidence>
<keyword id="KW-0067">ATP-binding</keyword>
<keyword id="KW-0143">Chaperone</keyword>
<keyword id="KW-0963">Cytoplasm</keyword>
<keyword id="KW-0547">Nucleotide-binding</keyword>
<keyword id="KW-1185">Reference proteome</keyword>
<keyword id="KW-0346">Stress response</keyword>
<accession>Q28W08</accession>
<organism>
    <name type="scientific">Jannaschia sp. (strain CCS1)</name>
    <dbReference type="NCBI Taxonomy" id="290400"/>
    <lineage>
        <taxon>Bacteria</taxon>
        <taxon>Pseudomonadati</taxon>
        <taxon>Pseudomonadota</taxon>
        <taxon>Alphaproteobacteria</taxon>
        <taxon>Rhodobacterales</taxon>
        <taxon>Roseobacteraceae</taxon>
        <taxon>Jannaschia</taxon>
    </lineage>
</organism>